<keyword id="KW-0112">Calmodulin-binding</keyword>
<keyword id="KW-0963">Cytoplasm</keyword>
<keyword id="KW-0206">Cytoskeleton</keyword>
<keyword id="KW-0539">Nucleus</keyword>
<keyword id="KW-1185">Reference proteome</keyword>
<evidence type="ECO:0000250" key="1">
    <source>
        <dbReference type="UniProtKB" id="Q9SF32"/>
    </source>
</evidence>
<evidence type="ECO:0000255" key="2">
    <source>
        <dbReference type="PROSITE-ProRule" id="PRU00116"/>
    </source>
</evidence>
<evidence type="ECO:0000256" key="3">
    <source>
        <dbReference type="SAM" id="MobiDB-lite"/>
    </source>
</evidence>
<evidence type="ECO:0000269" key="4">
    <source>
    </source>
</evidence>
<evidence type="ECO:0000303" key="5">
    <source>
    </source>
</evidence>
<evidence type="ECO:0000305" key="6"/>
<evidence type="ECO:0000312" key="7">
    <source>
        <dbReference type="Araport" id="AT3G15050"/>
    </source>
</evidence>
<evidence type="ECO:0000312" key="8">
    <source>
        <dbReference type="EMBL" id="BAA97068.1"/>
    </source>
</evidence>
<comment type="function">
    <text evidence="1">May be involved in cooperative interactions with calmodulins or calmodulin-like proteins (By similarity). Recruits calmodulin proteins to microtubules, thus being a potential scaffold in cellular signaling and trafficking (By similarity). May associate with nucleic acids and regulate gene expression at the transcriptional or post-transcriptional level (By similarity).</text>
</comment>
<comment type="subunit">
    <text evidence="1">Binds to multiple calmodulin (CaM) in the presence of Ca(2+) and CaM-like proteins.</text>
</comment>
<comment type="subcellular location">
    <subcellularLocation>
        <location evidence="4">Nucleus</location>
    </subcellularLocation>
    <subcellularLocation>
        <location evidence="4">Cytoplasm</location>
        <location evidence="4">Cytoskeleton</location>
    </subcellularLocation>
</comment>
<comment type="similarity">
    <text evidence="6">Belongs to the IQD family.</text>
</comment>
<organism>
    <name type="scientific">Arabidopsis thaliana</name>
    <name type="common">Mouse-ear cress</name>
    <dbReference type="NCBI Taxonomy" id="3702"/>
    <lineage>
        <taxon>Eukaryota</taxon>
        <taxon>Viridiplantae</taxon>
        <taxon>Streptophyta</taxon>
        <taxon>Embryophyta</taxon>
        <taxon>Tracheophyta</taxon>
        <taxon>Spermatophyta</taxon>
        <taxon>Magnoliopsida</taxon>
        <taxon>eudicotyledons</taxon>
        <taxon>Gunneridae</taxon>
        <taxon>Pentapetalae</taxon>
        <taxon>rosids</taxon>
        <taxon>malvids</taxon>
        <taxon>Brassicales</taxon>
        <taxon>Brassicaceae</taxon>
        <taxon>Camelineae</taxon>
        <taxon>Arabidopsis</taxon>
    </lineage>
</organism>
<reference key="1">
    <citation type="journal article" date="2000" name="DNA Res.">
        <title>Structural analysis of Arabidopsis thaliana chromosome 3. II. Sequence features of the 4,251,695 bp regions covered by 90 P1, TAC and BAC clones.</title>
        <authorList>
            <person name="Kaneko T."/>
            <person name="Katoh T."/>
            <person name="Sato S."/>
            <person name="Nakamura Y."/>
            <person name="Asamizu E."/>
            <person name="Tabata S."/>
        </authorList>
    </citation>
    <scope>NUCLEOTIDE SEQUENCE [LARGE SCALE GENOMIC DNA]</scope>
    <source>
        <strain>cv. Columbia</strain>
    </source>
</reference>
<reference key="2">
    <citation type="journal article" date="2017" name="Plant J.">
        <title>Araport11: a complete reannotation of the Arabidopsis thaliana reference genome.</title>
        <authorList>
            <person name="Cheng C.Y."/>
            <person name="Krishnakumar V."/>
            <person name="Chan A.P."/>
            <person name="Thibaud-Nissen F."/>
            <person name="Schobel S."/>
            <person name="Town C.D."/>
        </authorList>
    </citation>
    <scope>GENOME REANNOTATION</scope>
    <source>
        <strain>cv. Columbia</strain>
    </source>
</reference>
<reference key="3">
    <citation type="journal article" date="2005" name="BMC Evol. Biol.">
        <title>Genome-wide comparative analysis of the IQD gene families in Arabidopsis thaliana and Oryza sativa.</title>
        <authorList>
            <person name="Abel S."/>
            <person name="Savchenko T."/>
            <person name="Levy M."/>
        </authorList>
    </citation>
    <scope>INTERACTION WITH CALMODULIN</scope>
    <scope>GENE FAMILY</scope>
    <scope>NOMENCLATURE</scope>
    <source>
        <strain>cv. Columbia</strain>
    </source>
</reference>
<reference key="4">
    <citation type="journal article" date="2017" name="Plant Physiol.">
        <title>The IQD family of calmodulin-binding proteins links calcium signaling to microtubules, membrane subdomains, and the nucleus.</title>
        <authorList>
            <person name="Buerstenbinder K."/>
            <person name="Moeller B."/>
            <person name="Ploetner R."/>
            <person name="Stamm G."/>
            <person name="Hause G."/>
            <person name="Mitra D."/>
            <person name="Abel S."/>
        </authorList>
    </citation>
    <scope>SUBCELLULAR LOCATION</scope>
    <source>
        <strain>cv. Columbia</strain>
    </source>
</reference>
<reference key="5">
    <citation type="journal article" date="2017" name="Plant Signal. Behav.">
        <title>Functions of IQD proteins as hubs in cellular calcium and auxin signaling: A toolbox for shape formation and tissue-specification in plants?</title>
        <authorList>
            <person name="Buerstenbinder K."/>
            <person name="Mitra D."/>
            <person name="Quegwer J."/>
        </authorList>
    </citation>
    <scope>REVIEW</scope>
</reference>
<feature type="chain" id="PRO_0000453117" description="Protein IQ-DOMAIN 10">
    <location>
        <begin position="1"/>
        <end position="259"/>
    </location>
</feature>
<feature type="domain" description="IQ" evidence="2">
    <location>
        <begin position="50"/>
        <end position="77"/>
    </location>
</feature>
<feature type="region of interest" description="Disordered" evidence="3">
    <location>
        <begin position="18"/>
        <end position="39"/>
    </location>
</feature>
<feature type="region of interest" description="Calmodulin-binding" evidence="5">
    <location>
        <begin position="61"/>
        <end position="71"/>
    </location>
</feature>
<feature type="region of interest" description="Disordered" evidence="3">
    <location>
        <begin position="226"/>
        <end position="259"/>
    </location>
</feature>
<dbReference type="EMBL" id="AP000370">
    <property type="protein sequence ID" value="BAA97068.1"/>
    <property type="molecule type" value="Genomic_DNA"/>
</dbReference>
<dbReference type="EMBL" id="CP002686">
    <property type="protein sequence ID" value="AEE75610.1"/>
    <property type="molecule type" value="Genomic_DNA"/>
</dbReference>
<dbReference type="RefSeq" id="NP_188123.1">
    <property type="nucleotide sequence ID" value="NM_112367.3"/>
</dbReference>
<dbReference type="SMR" id="Q9LKA0"/>
<dbReference type="FunCoup" id="Q9LKA0">
    <property type="interactions" value="13"/>
</dbReference>
<dbReference type="STRING" id="3702.Q9LKA0"/>
<dbReference type="iPTMnet" id="Q9LKA0"/>
<dbReference type="PaxDb" id="3702-AT3G15050.1"/>
<dbReference type="ProteomicsDB" id="175148"/>
<dbReference type="EnsemblPlants" id="AT3G15050.1">
    <property type="protein sequence ID" value="AT3G15050.1"/>
    <property type="gene ID" value="AT3G15050"/>
</dbReference>
<dbReference type="GeneID" id="820734"/>
<dbReference type="Gramene" id="AT3G15050.1">
    <property type="protein sequence ID" value="AT3G15050.1"/>
    <property type="gene ID" value="AT3G15050"/>
</dbReference>
<dbReference type="KEGG" id="ath:AT3G15050"/>
<dbReference type="Araport" id="AT3G15050"/>
<dbReference type="TAIR" id="AT3G15050">
    <property type="gene designation" value="IQD10"/>
</dbReference>
<dbReference type="eggNOG" id="ENOG502QREU">
    <property type="taxonomic scope" value="Eukaryota"/>
</dbReference>
<dbReference type="HOGENOM" id="CLU_060053_1_0_1"/>
<dbReference type="InParanoid" id="Q9LKA0"/>
<dbReference type="OMA" id="LICFKAE"/>
<dbReference type="OrthoDB" id="1923765at2759"/>
<dbReference type="PhylomeDB" id="Q9LKA0"/>
<dbReference type="PRO" id="PR:Q9LKA0"/>
<dbReference type="Proteomes" id="UP000006548">
    <property type="component" value="Chromosome 3"/>
</dbReference>
<dbReference type="ExpressionAtlas" id="Q9LKA0">
    <property type="expression patterns" value="baseline and differential"/>
</dbReference>
<dbReference type="GO" id="GO:0005737">
    <property type="term" value="C:cytoplasm"/>
    <property type="evidence" value="ECO:0007669"/>
    <property type="project" value="UniProtKB-KW"/>
</dbReference>
<dbReference type="GO" id="GO:0005856">
    <property type="term" value="C:cytoskeleton"/>
    <property type="evidence" value="ECO:0007669"/>
    <property type="project" value="UniProtKB-SubCell"/>
</dbReference>
<dbReference type="GO" id="GO:0005634">
    <property type="term" value="C:nucleus"/>
    <property type="evidence" value="ECO:0007669"/>
    <property type="project" value="UniProtKB-SubCell"/>
</dbReference>
<dbReference type="GO" id="GO:0005516">
    <property type="term" value="F:calmodulin binding"/>
    <property type="evidence" value="ECO:0007669"/>
    <property type="project" value="UniProtKB-KW"/>
</dbReference>
<dbReference type="InterPro" id="IPR000048">
    <property type="entry name" value="IQ_motif_EF-hand-BS"/>
</dbReference>
<dbReference type="PANTHER" id="PTHR32295">
    <property type="entry name" value="IQ-DOMAIN 5-RELATED"/>
    <property type="match status" value="1"/>
</dbReference>
<dbReference type="PANTHER" id="PTHR32295:SF134">
    <property type="entry name" value="PROTEIN IQ-DOMAIN 10"/>
    <property type="match status" value="1"/>
</dbReference>
<dbReference type="Pfam" id="PF00612">
    <property type="entry name" value="IQ"/>
    <property type="match status" value="1"/>
</dbReference>
<dbReference type="PROSITE" id="PS50096">
    <property type="entry name" value="IQ"/>
    <property type="match status" value="1"/>
</dbReference>
<gene>
    <name evidence="5" type="primary">IQD10</name>
    <name evidence="7" type="ordered locus">At3g15050</name>
    <name evidence="8" type="ORF">K15M2.19</name>
</gene>
<proteinExistence type="evidence at protein level"/>
<sequence length="259" mass="29591">MGSGWLLRSIICLNGTKKNKSNRGNVHSETSNRVKPVESSSAASTKLTVEVAVIRIQKAFRAFKARKRLCSLKSARRFNSLIQGHTVMNQTSTALNVIHSWYDIQNQIRARRLYMVTQGRLQHKRLENRLKLEIKLHELEVEWCGGSETMEEILAKIQQKEEATVKRERAMAYAFSHQWRANATQYLGQASFNLGKESWGWSWKERWIAARPWEIRAQCYVVKPIKPSKKPEKSSPNNVITKTSAKPDEVGNSKKPGSG</sequence>
<name>IQD10_ARATH</name>
<accession>Q9LKA0</accession>
<protein>
    <recommendedName>
        <fullName evidence="5">Protein IQ-DOMAIN 10</fullName>
        <shortName evidence="5">AtIQD10</shortName>
    </recommendedName>
</protein>